<protein>
    <recommendedName>
        <fullName evidence="1">Leucine--tRNA ligase</fullName>
        <ecNumber evidence="1">6.1.1.4</ecNumber>
    </recommendedName>
    <alternativeName>
        <fullName evidence="1">Leucyl-tRNA synthetase</fullName>
        <shortName evidence="1">LeuRS</shortName>
    </alternativeName>
</protein>
<name>SYL_WOLWR</name>
<accession>C0R573</accession>
<keyword id="KW-0030">Aminoacyl-tRNA synthetase</keyword>
<keyword id="KW-0067">ATP-binding</keyword>
<keyword id="KW-0963">Cytoplasm</keyword>
<keyword id="KW-0436">Ligase</keyword>
<keyword id="KW-0547">Nucleotide-binding</keyword>
<keyword id="KW-0648">Protein biosynthesis</keyword>
<sequence length="838" mass="95498">MKYDFKNVERFCQDKWDFSVSKSSKQEKCYVLEMFPYPSGKIHMGHLRNYAIGDVIARYKRARGFEVLHPIGWDAFGLPAENAARDNNISPEIWTKENIDNMRAQLKSIGLSYNWNRELSTCEPNYYTHEQKFFLDFLKHGLAYRKESWVNWDPVDQTVLANEQVVDGKGWRSGAVVEKRKLSQWFLKITDFAEDLLKCLQSLKNWPEKVKTMQERWIGKSEGATIEFEVVGLNKKLKVFTTYPHTLFGASFCAVAAEHPIVQDLKNGSSVVIPVLDTGIQEIKSKRENDEKIGVYTGLNVKHPFLDKELPLYIANFVLMEYGEGAIFGCPAHDQRDFEFAQKYNLPIIPVISSAHLGVIPARDQNSYNGSQCQATQMTKEAYTGDGVMFNSEFLNGLMVSEAKEVIIKKLKEKGIGKKTTNYRLHDWGVSRQRYWGCPIPIIYCKDCGTVPVPEKDLPVILPADVEFTSGGNPLDKHPTWKFVDCPKCGKQAERETDTFDTFFESSWYFAAFCSEDKSIDKDACNRFMPVDYYIGGIEHAILHLLYSRFFCRALTKCGYFDIKEPFSTLITQGMVCHATYKDENGKWLFLAEAKELIARGTKVQVGKVEKMSKSKKNTVDPNFIIEKYGADTARLFVLSDTPPEKDMEWSDDGVEGCSRYVNKLWRMVMQLKPVNMHYDNKSVTGGLLEYRKKIHKLLHGLTDDLENCRLNCVVAKFREMTNLIAEIDVAAGKSLIDEGICILIRVIEPFMPHLAESLWQEIGGQPWPKADESLLVDDTVTIAVQINGKLRATIEVAINLPQEELKKIAIDSVSSKIDQNKVRTVYAVPNKIVNIVI</sequence>
<gene>
    <name evidence="1" type="primary">leuS</name>
    <name type="ordered locus">WRi_000480</name>
</gene>
<dbReference type="EC" id="6.1.1.4" evidence="1"/>
<dbReference type="EMBL" id="CP001391">
    <property type="protein sequence ID" value="ACN94915.1"/>
    <property type="molecule type" value="Genomic_DNA"/>
</dbReference>
<dbReference type="RefSeq" id="WP_012673049.1">
    <property type="nucleotide sequence ID" value="NZ_MKIF01000170.1"/>
</dbReference>
<dbReference type="SMR" id="C0R573"/>
<dbReference type="STRING" id="66084.WRi_000480"/>
<dbReference type="KEGG" id="wri:WRi_000480"/>
<dbReference type="HOGENOM" id="CLU_004427_0_0_5"/>
<dbReference type="Proteomes" id="UP000001293">
    <property type="component" value="Chromosome"/>
</dbReference>
<dbReference type="GO" id="GO:0005829">
    <property type="term" value="C:cytosol"/>
    <property type="evidence" value="ECO:0007669"/>
    <property type="project" value="TreeGrafter"/>
</dbReference>
<dbReference type="GO" id="GO:0002161">
    <property type="term" value="F:aminoacyl-tRNA deacylase activity"/>
    <property type="evidence" value="ECO:0007669"/>
    <property type="project" value="InterPro"/>
</dbReference>
<dbReference type="GO" id="GO:0005524">
    <property type="term" value="F:ATP binding"/>
    <property type="evidence" value="ECO:0007669"/>
    <property type="project" value="UniProtKB-UniRule"/>
</dbReference>
<dbReference type="GO" id="GO:0004823">
    <property type="term" value="F:leucine-tRNA ligase activity"/>
    <property type="evidence" value="ECO:0007669"/>
    <property type="project" value="UniProtKB-UniRule"/>
</dbReference>
<dbReference type="GO" id="GO:0006429">
    <property type="term" value="P:leucyl-tRNA aminoacylation"/>
    <property type="evidence" value="ECO:0007669"/>
    <property type="project" value="UniProtKB-UniRule"/>
</dbReference>
<dbReference type="CDD" id="cd07958">
    <property type="entry name" value="Anticodon_Ia_Leu_BEm"/>
    <property type="match status" value="1"/>
</dbReference>
<dbReference type="CDD" id="cd00812">
    <property type="entry name" value="LeuRS_core"/>
    <property type="match status" value="1"/>
</dbReference>
<dbReference type="FunFam" id="1.10.730.10:FF:000002">
    <property type="entry name" value="Leucine--tRNA ligase"/>
    <property type="match status" value="1"/>
</dbReference>
<dbReference type="Gene3D" id="3.40.50.620">
    <property type="entry name" value="HUPs"/>
    <property type="match status" value="2"/>
</dbReference>
<dbReference type="Gene3D" id="1.10.730.10">
    <property type="entry name" value="Isoleucyl-tRNA Synthetase, Domain 1"/>
    <property type="match status" value="2"/>
</dbReference>
<dbReference type="HAMAP" id="MF_00049_B">
    <property type="entry name" value="Leu_tRNA_synth_B"/>
    <property type="match status" value="1"/>
</dbReference>
<dbReference type="InterPro" id="IPR001412">
    <property type="entry name" value="aa-tRNA-synth_I_CS"/>
</dbReference>
<dbReference type="InterPro" id="IPR002300">
    <property type="entry name" value="aa-tRNA-synth_Ia"/>
</dbReference>
<dbReference type="InterPro" id="IPR002302">
    <property type="entry name" value="Leu-tRNA-ligase"/>
</dbReference>
<dbReference type="InterPro" id="IPR025709">
    <property type="entry name" value="Leu_tRNA-synth_edit"/>
</dbReference>
<dbReference type="InterPro" id="IPR013155">
    <property type="entry name" value="M/V/L/I-tRNA-synth_anticd-bd"/>
</dbReference>
<dbReference type="InterPro" id="IPR015413">
    <property type="entry name" value="Methionyl/Leucyl_tRNA_Synth"/>
</dbReference>
<dbReference type="InterPro" id="IPR014729">
    <property type="entry name" value="Rossmann-like_a/b/a_fold"/>
</dbReference>
<dbReference type="InterPro" id="IPR009080">
    <property type="entry name" value="tRNAsynth_Ia_anticodon-bd"/>
</dbReference>
<dbReference type="InterPro" id="IPR009008">
    <property type="entry name" value="Val/Leu/Ile-tRNA-synth_edit"/>
</dbReference>
<dbReference type="NCBIfam" id="TIGR00396">
    <property type="entry name" value="leuS_bact"/>
    <property type="match status" value="1"/>
</dbReference>
<dbReference type="PANTHER" id="PTHR43740:SF2">
    <property type="entry name" value="LEUCINE--TRNA LIGASE, MITOCHONDRIAL"/>
    <property type="match status" value="1"/>
</dbReference>
<dbReference type="PANTHER" id="PTHR43740">
    <property type="entry name" value="LEUCYL-TRNA SYNTHETASE"/>
    <property type="match status" value="1"/>
</dbReference>
<dbReference type="Pfam" id="PF08264">
    <property type="entry name" value="Anticodon_1"/>
    <property type="match status" value="1"/>
</dbReference>
<dbReference type="Pfam" id="PF00133">
    <property type="entry name" value="tRNA-synt_1"/>
    <property type="match status" value="1"/>
</dbReference>
<dbReference type="Pfam" id="PF13603">
    <property type="entry name" value="tRNA-synt_1_2"/>
    <property type="match status" value="1"/>
</dbReference>
<dbReference type="Pfam" id="PF09334">
    <property type="entry name" value="tRNA-synt_1g"/>
    <property type="match status" value="1"/>
</dbReference>
<dbReference type="PRINTS" id="PR00985">
    <property type="entry name" value="TRNASYNTHLEU"/>
</dbReference>
<dbReference type="SUPFAM" id="SSF47323">
    <property type="entry name" value="Anticodon-binding domain of a subclass of class I aminoacyl-tRNA synthetases"/>
    <property type="match status" value="1"/>
</dbReference>
<dbReference type="SUPFAM" id="SSF52374">
    <property type="entry name" value="Nucleotidylyl transferase"/>
    <property type="match status" value="1"/>
</dbReference>
<dbReference type="SUPFAM" id="SSF50677">
    <property type="entry name" value="ValRS/IleRS/LeuRS editing domain"/>
    <property type="match status" value="1"/>
</dbReference>
<dbReference type="PROSITE" id="PS00178">
    <property type="entry name" value="AA_TRNA_LIGASE_I"/>
    <property type="match status" value="1"/>
</dbReference>
<reference key="1">
    <citation type="journal article" date="2009" name="Proc. Natl. Acad. Sci. U.S.A.">
        <title>The mosaic genome structure of the Wolbachia wRi strain infecting Drosophila simulans.</title>
        <authorList>
            <person name="Klasson L."/>
            <person name="Westberg J."/>
            <person name="Sapountzis P."/>
            <person name="Naeslund K."/>
            <person name="Lutnaes Y."/>
            <person name="Darby A.C."/>
            <person name="Veneti Z."/>
            <person name="Chen L."/>
            <person name="Braig H.R."/>
            <person name="Garrett R."/>
            <person name="Bourtzis K."/>
            <person name="Andersson S.G."/>
        </authorList>
    </citation>
    <scope>NUCLEOTIDE SEQUENCE [LARGE SCALE GENOMIC DNA]</scope>
    <source>
        <strain>wRi</strain>
    </source>
</reference>
<comment type="catalytic activity">
    <reaction evidence="1">
        <text>tRNA(Leu) + L-leucine + ATP = L-leucyl-tRNA(Leu) + AMP + diphosphate</text>
        <dbReference type="Rhea" id="RHEA:11688"/>
        <dbReference type="Rhea" id="RHEA-COMP:9613"/>
        <dbReference type="Rhea" id="RHEA-COMP:9622"/>
        <dbReference type="ChEBI" id="CHEBI:30616"/>
        <dbReference type="ChEBI" id="CHEBI:33019"/>
        <dbReference type="ChEBI" id="CHEBI:57427"/>
        <dbReference type="ChEBI" id="CHEBI:78442"/>
        <dbReference type="ChEBI" id="CHEBI:78494"/>
        <dbReference type="ChEBI" id="CHEBI:456215"/>
        <dbReference type="EC" id="6.1.1.4"/>
    </reaction>
</comment>
<comment type="subcellular location">
    <subcellularLocation>
        <location evidence="1">Cytoplasm</location>
    </subcellularLocation>
</comment>
<comment type="similarity">
    <text evidence="1">Belongs to the class-I aminoacyl-tRNA synthetase family.</text>
</comment>
<evidence type="ECO:0000255" key="1">
    <source>
        <dbReference type="HAMAP-Rule" id="MF_00049"/>
    </source>
</evidence>
<feature type="chain" id="PRO_1000199234" description="Leucine--tRNA ligase">
    <location>
        <begin position="1"/>
        <end position="838"/>
    </location>
</feature>
<feature type="short sequence motif" description="'HIGH' region">
    <location>
        <begin position="36"/>
        <end position="46"/>
    </location>
</feature>
<feature type="short sequence motif" description="'KMSKS' region">
    <location>
        <begin position="611"/>
        <end position="615"/>
    </location>
</feature>
<feature type="binding site" evidence="1">
    <location>
        <position position="614"/>
    </location>
    <ligand>
        <name>ATP</name>
        <dbReference type="ChEBI" id="CHEBI:30616"/>
    </ligand>
</feature>
<organism>
    <name type="scientific">Wolbachia sp. subsp. Drosophila simulans (strain wRi)</name>
    <dbReference type="NCBI Taxonomy" id="66084"/>
    <lineage>
        <taxon>Bacteria</taxon>
        <taxon>Pseudomonadati</taxon>
        <taxon>Pseudomonadota</taxon>
        <taxon>Alphaproteobacteria</taxon>
        <taxon>Rickettsiales</taxon>
        <taxon>Anaplasmataceae</taxon>
        <taxon>Wolbachieae</taxon>
        <taxon>Wolbachia</taxon>
    </lineage>
</organism>
<proteinExistence type="inferred from homology"/>